<sequence length="187" mass="20229">MSETNPNQTKPPATGYQSTEEMVAAQGAYESDALSRAQADLAELQAKSAELADQYLRAKAEADNARRRAEDEISKARKFAVEAFAESLLPVADSLEAGLIIKDATIDHLREGTQATLRQLLAALERNKVIPINPQPGTTKFDPHQHQAISVVPSEFDANIVVTVLQKGYAIADRVLRPALVTVAAPK</sequence>
<accession>Q21X08</accession>
<keyword id="KW-0143">Chaperone</keyword>
<keyword id="KW-0963">Cytoplasm</keyword>
<keyword id="KW-1185">Reference proteome</keyword>
<keyword id="KW-0346">Stress response</keyword>
<reference key="1">
    <citation type="submission" date="2006-02" db="EMBL/GenBank/DDBJ databases">
        <title>Complete sequence of chromosome of Rhodoferax ferrireducens DSM 15236.</title>
        <authorList>
            <person name="Copeland A."/>
            <person name="Lucas S."/>
            <person name="Lapidus A."/>
            <person name="Barry K."/>
            <person name="Detter J.C."/>
            <person name="Glavina del Rio T."/>
            <person name="Hammon N."/>
            <person name="Israni S."/>
            <person name="Pitluck S."/>
            <person name="Brettin T."/>
            <person name="Bruce D."/>
            <person name="Han C."/>
            <person name="Tapia R."/>
            <person name="Gilna P."/>
            <person name="Kiss H."/>
            <person name="Schmutz J."/>
            <person name="Larimer F."/>
            <person name="Land M."/>
            <person name="Kyrpides N."/>
            <person name="Ivanova N."/>
            <person name="Richardson P."/>
        </authorList>
    </citation>
    <scope>NUCLEOTIDE SEQUENCE [LARGE SCALE GENOMIC DNA]</scope>
    <source>
        <strain>ATCC BAA-621 / DSM 15236 / T118</strain>
    </source>
</reference>
<gene>
    <name evidence="1" type="primary">grpE</name>
    <name type="ordered locus">Rfer_1970</name>
</gene>
<organism>
    <name type="scientific">Albidiferax ferrireducens (strain ATCC BAA-621 / DSM 15236 / T118)</name>
    <name type="common">Rhodoferax ferrireducens</name>
    <dbReference type="NCBI Taxonomy" id="338969"/>
    <lineage>
        <taxon>Bacteria</taxon>
        <taxon>Pseudomonadati</taxon>
        <taxon>Pseudomonadota</taxon>
        <taxon>Betaproteobacteria</taxon>
        <taxon>Burkholderiales</taxon>
        <taxon>Comamonadaceae</taxon>
        <taxon>Rhodoferax</taxon>
    </lineage>
</organism>
<evidence type="ECO:0000255" key="1">
    <source>
        <dbReference type="HAMAP-Rule" id="MF_01151"/>
    </source>
</evidence>
<dbReference type="EMBL" id="CP000267">
    <property type="protein sequence ID" value="ABD69695.1"/>
    <property type="molecule type" value="Genomic_DNA"/>
</dbReference>
<dbReference type="RefSeq" id="WP_011464263.1">
    <property type="nucleotide sequence ID" value="NC_007908.1"/>
</dbReference>
<dbReference type="SMR" id="Q21X08"/>
<dbReference type="STRING" id="338969.Rfer_1970"/>
<dbReference type="KEGG" id="rfr:Rfer_1970"/>
<dbReference type="eggNOG" id="COG0576">
    <property type="taxonomic scope" value="Bacteria"/>
</dbReference>
<dbReference type="HOGENOM" id="CLU_057217_6_1_4"/>
<dbReference type="OrthoDB" id="9789811at2"/>
<dbReference type="Proteomes" id="UP000008332">
    <property type="component" value="Chromosome"/>
</dbReference>
<dbReference type="GO" id="GO:0005829">
    <property type="term" value="C:cytosol"/>
    <property type="evidence" value="ECO:0007669"/>
    <property type="project" value="TreeGrafter"/>
</dbReference>
<dbReference type="GO" id="GO:0000774">
    <property type="term" value="F:adenyl-nucleotide exchange factor activity"/>
    <property type="evidence" value="ECO:0007669"/>
    <property type="project" value="InterPro"/>
</dbReference>
<dbReference type="GO" id="GO:0042803">
    <property type="term" value="F:protein homodimerization activity"/>
    <property type="evidence" value="ECO:0007669"/>
    <property type="project" value="InterPro"/>
</dbReference>
<dbReference type="GO" id="GO:0051087">
    <property type="term" value="F:protein-folding chaperone binding"/>
    <property type="evidence" value="ECO:0007669"/>
    <property type="project" value="InterPro"/>
</dbReference>
<dbReference type="GO" id="GO:0051082">
    <property type="term" value="F:unfolded protein binding"/>
    <property type="evidence" value="ECO:0007669"/>
    <property type="project" value="TreeGrafter"/>
</dbReference>
<dbReference type="GO" id="GO:0006457">
    <property type="term" value="P:protein folding"/>
    <property type="evidence" value="ECO:0007669"/>
    <property type="project" value="InterPro"/>
</dbReference>
<dbReference type="CDD" id="cd00446">
    <property type="entry name" value="GrpE"/>
    <property type="match status" value="1"/>
</dbReference>
<dbReference type="Gene3D" id="3.90.20.20">
    <property type="match status" value="1"/>
</dbReference>
<dbReference type="Gene3D" id="2.30.22.10">
    <property type="entry name" value="Head domain of nucleotide exchange factor GrpE"/>
    <property type="match status" value="1"/>
</dbReference>
<dbReference type="HAMAP" id="MF_01151">
    <property type="entry name" value="GrpE"/>
    <property type="match status" value="1"/>
</dbReference>
<dbReference type="InterPro" id="IPR000740">
    <property type="entry name" value="GrpE"/>
</dbReference>
<dbReference type="InterPro" id="IPR013805">
    <property type="entry name" value="GrpE_coiled_coil"/>
</dbReference>
<dbReference type="InterPro" id="IPR009012">
    <property type="entry name" value="GrpE_head"/>
</dbReference>
<dbReference type="NCBIfam" id="NF010737">
    <property type="entry name" value="PRK14139.1"/>
    <property type="match status" value="1"/>
</dbReference>
<dbReference type="NCBIfam" id="NF010738">
    <property type="entry name" value="PRK14140.1"/>
    <property type="match status" value="1"/>
</dbReference>
<dbReference type="PANTHER" id="PTHR21237">
    <property type="entry name" value="GRPE PROTEIN"/>
    <property type="match status" value="1"/>
</dbReference>
<dbReference type="PANTHER" id="PTHR21237:SF23">
    <property type="entry name" value="GRPE PROTEIN HOMOLOG, MITOCHONDRIAL"/>
    <property type="match status" value="1"/>
</dbReference>
<dbReference type="Pfam" id="PF01025">
    <property type="entry name" value="GrpE"/>
    <property type="match status" value="1"/>
</dbReference>
<dbReference type="PRINTS" id="PR00773">
    <property type="entry name" value="GRPEPROTEIN"/>
</dbReference>
<dbReference type="SUPFAM" id="SSF58014">
    <property type="entry name" value="Coiled-coil domain of nucleotide exchange factor GrpE"/>
    <property type="match status" value="1"/>
</dbReference>
<dbReference type="SUPFAM" id="SSF51064">
    <property type="entry name" value="Head domain of nucleotide exchange factor GrpE"/>
    <property type="match status" value="1"/>
</dbReference>
<dbReference type="PROSITE" id="PS01071">
    <property type="entry name" value="GRPE"/>
    <property type="match status" value="1"/>
</dbReference>
<comment type="function">
    <text evidence="1">Participates actively in the response to hyperosmotic and heat shock by preventing the aggregation of stress-denatured proteins, in association with DnaK and GrpE. It is the nucleotide exchange factor for DnaK and may function as a thermosensor. Unfolded proteins bind initially to DnaJ; upon interaction with the DnaJ-bound protein, DnaK hydrolyzes its bound ATP, resulting in the formation of a stable complex. GrpE releases ADP from DnaK; ATP binding to DnaK triggers the release of the substrate protein, thus completing the reaction cycle. Several rounds of ATP-dependent interactions between DnaJ, DnaK and GrpE are required for fully efficient folding.</text>
</comment>
<comment type="subunit">
    <text evidence="1">Homodimer.</text>
</comment>
<comment type="subcellular location">
    <subcellularLocation>
        <location evidence="1">Cytoplasm</location>
    </subcellularLocation>
</comment>
<comment type="similarity">
    <text evidence="1">Belongs to the GrpE family.</text>
</comment>
<name>GRPE_ALBFT</name>
<protein>
    <recommendedName>
        <fullName evidence="1">Protein GrpE</fullName>
    </recommendedName>
    <alternativeName>
        <fullName evidence="1">HSP-70 cofactor</fullName>
    </alternativeName>
</protein>
<proteinExistence type="inferred from homology"/>
<feature type="chain" id="PRO_1000213674" description="Protein GrpE">
    <location>
        <begin position="1"/>
        <end position="187"/>
    </location>
</feature>